<evidence type="ECO:0000255" key="1">
    <source>
        <dbReference type="HAMAP-Rule" id="MF_01347"/>
    </source>
</evidence>
<comment type="function">
    <text evidence="1">Produces ATP from ADP in the presence of a proton gradient across the membrane. The catalytic sites are hosted primarily by the beta subunits.</text>
</comment>
<comment type="catalytic activity">
    <reaction evidence="1">
        <text>ATP + H2O + 4 H(+)(in) = ADP + phosphate + 5 H(+)(out)</text>
        <dbReference type="Rhea" id="RHEA:57720"/>
        <dbReference type="ChEBI" id="CHEBI:15377"/>
        <dbReference type="ChEBI" id="CHEBI:15378"/>
        <dbReference type="ChEBI" id="CHEBI:30616"/>
        <dbReference type="ChEBI" id="CHEBI:43474"/>
        <dbReference type="ChEBI" id="CHEBI:456216"/>
        <dbReference type="EC" id="7.1.2.2"/>
    </reaction>
</comment>
<comment type="subunit">
    <text evidence="1">F-type ATPases have 2 components, CF(1) - the catalytic core - and CF(0) - the membrane proton channel. CF(1) has five subunits: alpha(3), beta(3), gamma(1), delta(1), epsilon(1). CF(0) has three main subunits: a(1), b(2) and c(9-12). The alpha and beta chains form an alternating ring which encloses part of the gamma chain. CF(1) is attached to CF(0) by a central stalk formed by the gamma and epsilon chains, while a peripheral stalk is formed by the delta and b chains.</text>
</comment>
<comment type="subcellular location">
    <subcellularLocation>
        <location evidence="1">Cell membrane</location>
        <topology evidence="1">Peripheral membrane protein</topology>
    </subcellularLocation>
</comment>
<comment type="similarity">
    <text evidence="1">Belongs to the ATPase alpha/beta chains family.</text>
</comment>
<accession>A4J999</accession>
<keyword id="KW-0066">ATP synthesis</keyword>
<keyword id="KW-0067">ATP-binding</keyword>
<keyword id="KW-1003">Cell membrane</keyword>
<keyword id="KW-0139">CF(1)</keyword>
<keyword id="KW-0375">Hydrogen ion transport</keyword>
<keyword id="KW-0406">Ion transport</keyword>
<keyword id="KW-0472">Membrane</keyword>
<keyword id="KW-0547">Nucleotide-binding</keyword>
<keyword id="KW-1185">Reference proteome</keyword>
<keyword id="KW-1278">Translocase</keyword>
<keyword id="KW-0813">Transport</keyword>
<sequence length="472" mass="51302">MNVGHIVSVIGVVVDVEFAPGQVPDIYSAVKIRTEDQEDKSTKWNLTLEVAQHLGNNRVRCIAMSSTEGLKRGMKVVSTGKAISVPVGRPVLGRLLNVLGEEADGLEPIKAEKYYPIHRPAPALVDQSTKAEMLETGIKVIDLMIPFLKGGKIGLFGGAGVGKTVIVMELINNIAKQHGGISVFAGVGERTREGNDLYHEMKEAGVLEKTIMVFGQMNEPPGARLRVGLTGLTMAEFFRDEEGADTLLFIDNIFRFTQAGSEVSALLGRMPSAVGYQPTLATEMGQLQERITSTRKGSVTSVQAIYVPADDLTDPAPANAFAHLDATVVLSRAISELGIYPAVDPLDSTSRILDPQVVGKEHYECARGVQSVLQRYKELQDIIAILGMDELSDEDKLTVARARKLQRFLSQPFHVAETFTGRPGKYVSLKDTIRSFNEILAGKHDALPEQAFYMAGAIEEVMENAKRIEAGA</sequence>
<protein>
    <recommendedName>
        <fullName evidence="1">ATP synthase subunit beta</fullName>
        <ecNumber evidence="1">7.1.2.2</ecNumber>
    </recommendedName>
    <alternativeName>
        <fullName evidence="1">ATP synthase F1 sector subunit beta</fullName>
    </alternativeName>
    <alternativeName>
        <fullName evidence="1">F-ATPase subunit beta</fullName>
    </alternativeName>
</protein>
<name>ATPB_DESRM</name>
<reference key="1">
    <citation type="submission" date="2007-03" db="EMBL/GenBank/DDBJ databases">
        <title>Complete sequence of Desulfotomaculum reducens MI-1.</title>
        <authorList>
            <consortium name="US DOE Joint Genome Institute"/>
            <person name="Copeland A."/>
            <person name="Lucas S."/>
            <person name="Lapidus A."/>
            <person name="Barry K."/>
            <person name="Detter J.C."/>
            <person name="Glavina del Rio T."/>
            <person name="Hammon N."/>
            <person name="Israni S."/>
            <person name="Dalin E."/>
            <person name="Tice H."/>
            <person name="Pitluck S."/>
            <person name="Sims D."/>
            <person name="Brettin T."/>
            <person name="Bruce D."/>
            <person name="Han C."/>
            <person name="Tapia R."/>
            <person name="Schmutz J."/>
            <person name="Larimer F."/>
            <person name="Land M."/>
            <person name="Hauser L."/>
            <person name="Kyrpides N."/>
            <person name="Kim E."/>
            <person name="Tebo B.M."/>
            <person name="Richardson P."/>
        </authorList>
    </citation>
    <scope>NUCLEOTIDE SEQUENCE [LARGE SCALE GENOMIC DNA]</scope>
    <source>
        <strain>ATCC BAA-1160 / DSM 100696 / MI-1</strain>
    </source>
</reference>
<dbReference type="EC" id="7.1.2.2" evidence="1"/>
<dbReference type="EMBL" id="CP000612">
    <property type="protein sequence ID" value="ABO51652.1"/>
    <property type="molecule type" value="Genomic_DNA"/>
</dbReference>
<dbReference type="RefSeq" id="WP_011879440.1">
    <property type="nucleotide sequence ID" value="NC_009253.1"/>
</dbReference>
<dbReference type="SMR" id="A4J999"/>
<dbReference type="STRING" id="349161.Dred_3150"/>
<dbReference type="KEGG" id="drm:Dred_3150"/>
<dbReference type="eggNOG" id="COG0055">
    <property type="taxonomic scope" value="Bacteria"/>
</dbReference>
<dbReference type="HOGENOM" id="CLU_022398_0_2_9"/>
<dbReference type="OrthoDB" id="9803053at2"/>
<dbReference type="Proteomes" id="UP000001556">
    <property type="component" value="Chromosome"/>
</dbReference>
<dbReference type="GO" id="GO:0005886">
    <property type="term" value="C:plasma membrane"/>
    <property type="evidence" value="ECO:0007669"/>
    <property type="project" value="UniProtKB-SubCell"/>
</dbReference>
<dbReference type="GO" id="GO:0045259">
    <property type="term" value="C:proton-transporting ATP synthase complex"/>
    <property type="evidence" value="ECO:0007669"/>
    <property type="project" value="UniProtKB-KW"/>
</dbReference>
<dbReference type="GO" id="GO:0005524">
    <property type="term" value="F:ATP binding"/>
    <property type="evidence" value="ECO:0007669"/>
    <property type="project" value="UniProtKB-UniRule"/>
</dbReference>
<dbReference type="GO" id="GO:0016887">
    <property type="term" value="F:ATP hydrolysis activity"/>
    <property type="evidence" value="ECO:0007669"/>
    <property type="project" value="InterPro"/>
</dbReference>
<dbReference type="GO" id="GO:0046933">
    <property type="term" value="F:proton-transporting ATP synthase activity, rotational mechanism"/>
    <property type="evidence" value="ECO:0007669"/>
    <property type="project" value="UniProtKB-UniRule"/>
</dbReference>
<dbReference type="CDD" id="cd18110">
    <property type="entry name" value="ATP-synt_F1_beta_C"/>
    <property type="match status" value="1"/>
</dbReference>
<dbReference type="CDD" id="cd18115">
    <property type="entry name" value="ATP-synt_F1_beta_N"/>
    <property type="match status" value="1"/>
</dbReference>
<dbReference type="CDD" id="cd01133">
    <property type="entry name" value="F1-ATPase_beta_CD"/>
    <property type="match status" value="1"/>
</dbReference>
<dbReference type="FunFam" id="1.10.1140.10:FF:000001">
    <property type="entry name" value="ATP synthase subunit beta"/>
    <property type="match status" value="1"/>
</dbReference>
<dbReference type="FunFam" id="2.40.10.170:FF:000005">
    <property type="entry name" value="ATP synthase subunit beta"/>
    <property type="match status" value="1"/>
</dbReference>
<dbReference type="FunFam" id="3.40.50.300:FF:000004">
    <property type="entry name" value="ATP synthase subunit beta"/>
    <property type="match status" value="1"/>
</dbReference>
<dbReference type="Gene3D" id="2.40.10.170">
    <property type="match status" value="1"/>
</dbReference>
<dbReference type="Gene3D" id="1.10.1140.10">
    <property type="entry name" value="Bovine Mitochondrial F1-atpase, Atp Synthase Beta Chain, Chain D, domain 3"/>
    <property type="match status" value="1"/>
</dbReference>
<dbReference type="Gene3D" id="3.40.50.300">
    <property type="entry name" value="P-loop containing nucleotide triphosphate hydrolases"/>
    <property type="match status" value="1"/>
</dbReference>
<dbReference type="HAMAP" id="MF_01347">
    <property type="entry name" value="ATP_synth_beta_bact"/>
    <property type="match status" value="1"/>
</dbReference>
<dbReference type="InterPro" id="IPR003593">
    <property type="entry name" value="AAA+_ATPase"/>
</dbReference>
<dbReference type="InterPro" id="IPR055190">
    <property type="entry name" value="ATP-synt_VA_C"/>
</dbReference>
<dbReference type="InterPro" id="IPR005722">
    <property type="entry name" value="ATP_synth_F1_bsu"/>
</dbReference>
<dbReference type="InterPro" id="IPR020003">
    <property type="entry name" value="ATPase_a/bsu_AS"/>
</dbReference>
<dbReference type="InterPro" id="IPR050053">
    <property type="entry name" value="ATPase_alpha/beta_chains"/>
</dbReference>
<dbReference type="InterPro" id="IPR004100">
    <property type="entry name" value="ATPase_F1/V1/A1_a/bsu_N"/>
</dbReference>
<dbReference type="InterPro" id="IPR036121">
    <property type="entry name" value="ATPase_F1/V1/A1_a/bsu_N_sf"/>
</dbReference>
<dbReference type="InterPro" id="IPR000194">
    <property type="entry name" value="ATPase_F1/V1/A1_a/bsu_nucl-bd"/>
</dbReference>
<dbReference type="InterPro" id="IPR024034">
    <property type="entry name" value="ATPase_F1/V1_b/a_C"/>
</dbReference>
<dbReference type="InterPro" id="IPR027417">
    <property type="entry name" value="P-loop_NTPase"/>
</dbReference>
<dbReference type="NCBIfam" id="TIGR01039">
    <property type="entry name" value="atpD"/>
    <property type="match status" value="1"/>
</dbReference>
<dbReference type="PANTHER" id="PTHR15184">
    <property type="entry name" value="ATP SYNTHASE"/>
    <property type="match status" value="1"/>
</dbReference>
<dbReference type="PANTHER" id="PTHR15184:SF71">
    <property type="entry name" value="ATP SYNTHASE SUBUNIT BETA, MITOCHONDRIAL"/>
    <property type="match status" value="1"/>
</dbReference>
<dbReference type="Pfam" id="PF00006">
    <property type="entry name" value="ATP-synt_ab"/>
    <property type="match status" value="1"/>
</dbReference>
<dbReference type="Pfam" id="PF02874">
    <property type="entry name" value="ATP-synt_ab_N"/>
    <property type="match status" value="1"/>
</dbReference>
<dbReference type="Pfam" id="PF22919">
    <property type="entry name" value="ATP-synt_VA_C"/>
    <property type="match status" value="1"/>
</dbReference>
<dbReference type="SMART" id="SM00382">
    <property type="entry name" value="AAA"/>
    <property type="match status" value="1"/>
</dbReference>
<dbReference type="SUPFAM" id="SSF47917">
    <property type="entry name" value="C-terminal domain of alpha and beta subunits of F1 ATP synthase"/>
    <property type="match status" value="1"/>
</dbReference>
<dbReference type="SUPFAM" id="SSF50615">
    <property type="entry name" value="N-terminal domain of alpha and beta subunits of F1 ATP synthase"/>
    <property type="match status" value="1"/>
</dbReference>
<dbReference type="SUPFAM" id="SSF52540">
    <property type="entry name" value="P-loop containing nucleoside triphosphate hydrolases"/>
    <property type="match status" value="1"/>
</dbReference>
<dbReference type="PROSITE" id="PS00152">
    <property type="entry name" value="ATPASE_ALPHA_BETA"/>
    <property type="match status" value="1"/>
</dbReference>
<gene>
    <name evidence="1" type="primary">atpD</name>
    <name type="ordered locus">Dred_3150</name>
</gene>
<feature type="chain" id="PRO_0000339525" description="ATP synthase subunit beta">
    <location>
        <begin position="1"/>
        <end position="472"/>
    </location>
</feature>
<feature type="binding site" evidence="1">
    <location>
        <begin position="157"/>
        <end position="164"/>
    </location>
    <ligand>
        <name>ATP</name>
        <dbReference type="ChEBI" id="CHEBI:30616"/>
    </ligand>
</feature>
<proteinExistence type="inferred from homology"/>
<organism>
    <name type="scientific">Desulforamulus reducens (strain ATCC BAA-1160 / DSM 100696 / MI-1)</name>
    <name type="common">Desulfotomaculum reducens</name>
    <dbReference type="NCBI Taxonomy" id="349161"/>
    <lineage>
        <taxon>Bacteria</taxon>
        <taxon>Bacillati</taxon>
        <taxon>Bacillota</taxon>
        <taxon>Clostridia</taxon>
        <taxon>Eubacteriales</taxon>
        <taxon>Peptococcaceae</taxon>
        <taxon>Desulforamulus</taxon>
    </lineage>
</organism>